<reference key="1">
    <citation type="journal article" date="1993" name="Nature">
        <title>Potential virulence determinants in terminal regions of variola smallpox virus genome.</title>
        <authorList>
            <person name="Massung R.F."/>
            <person name="Esposito J.J."/>
            <person name="Liu L.I."/>
            <person name="Qi J."/>
            <person name="Utterback T.R."/>
            <person name="Knight J.C."/>
            <person name="Aubin L."/>
            <person name="Yuran T.E."/>
            <person name="Parsons J.M."/>
            <person name="Loparev V.N."/>
            <person name="Selivanov N.A."/>
            <person name="Cavallaro K.F."/>
            <person name="Kerlavage A.R."/>
            <person name="Mahy B.W.J."/>
            <person name="Venter J.C."/>
        </authorList>
    </citation>
    <scope>NUCLEOTIDE SEQUENCE [GENOMIC DNA]</scope>
    <source>
        <strain>Bangladesh-1975</strain>
    </source>
</reference>
<accession>P0DOS6</accession>
<accession>P33845</accession>
<protein>
    <recommendedName>
        <fullName>Resolvase OPG149</fullName>
        <ecNumber>3.1.-.-</ecNumber>
    </recommendedName>
</protein>
<sequence length="187" mass="21995">METLTSSSQSLISSPMSKKDYSSEIICAFDIGAKNPARTVLEVKDNSVRVLDISKLDWSSDWERRIAKDLSQYEYTTVLLERQPRRSPYVKFIYFIKGFLYHTSATKVICVSPVMSGNSYRDRKKRSVEAFFDWMDIFGLRDSVPDRRKLDDVADSFNLAMRYVLDKWNTNYTHYNRCKSRNYIKKM</sequence>
<keyword id="KW-0227">DNA damage</keyword>
<keyword id="KW-0233">DNA recombination</keyword>
<keyword id="KW-0234">DNA repair</keyword>
<keyword id="KW-0378">Hydrolase</keyword>
<keyword id="KW-0449">Lipoprotein</keyword>
<keyword id="KW-0460">Magnesium</keyword>
<keyword id="KW-0540">Nuclease</keyword>
<keyword id="KW-0564">Palmitate</keyword>
<keyword id="KW-0597">Phosphoprotein</keyword>
<dbReference type="EC" id="3.1.-.-"/>
<dbReference type="EMBL" id="L22579">
    <property type="protein sequence ID" value="AAA60874.1"/>
    <property type="molecule type" value="Genomic_DNA"/>
</dbReference>
<dbReference type="PIR" id="T28564">
    <property type="entry name" value="T28564"/>
</dbReference>
<dbReference type="RefSeq" id="NP_042170.1">
    <property type="nucleotide sequence ID" value="NC_001611.1"/>
</dbReference>
<dbReference type="SMR" id="P0DOS6"/>
<dbReference type="GeneID" id="1486498"/>
<dbReference type="KEGG" id="vg:1486498"/>
<dbReference type="Proteomes" id="UP000119805">
    <property type="component" value="Segment"/>
</dbReference>
<dbReference type="GO" id="GO:0000400">
    <property type="term" value="F:four-way junction DNA binding"/>
    <property type="evidence" value="ECO:0007669"/>
    <property type="project" value="InterPro"/>
</dbReference>
<dbReference type="GO" id="GO:0000287">
    <property type="term" value="F:magnesium ion binding"/>
    <property type="evidence" value="ECO:0007669"/>
    <property type="project" value="InterPro"/>
</dbReference>
<dbReference type="GO" id="GO:0004518">
    <property type="term" value="F:nuclease activity"/>
    <property type="evidence" value="ECO:0007669"/>
    <property type="project" value="UniProtKB-KW"/>
</dbReference>
<dbReference type="GO" id="GO:0006310">
    <property type="term" value="P:DNA recombination"/>
    <property type="evidence" value="ECO:0007669"/>
    <property type="project" value="UniProtKB-KW"/>
</dbReference>
<dbReference type="GO" id="GO:0006281">
    <property type="term" value="P:DNA repair"/>
    <property type="evidence" value="ECO:0007669"/>
    <property type="project" value="UniProtKB-KW"/>
</dbReference>
<dbReference type="InterPro" id="IPR006932">
    <property type="entry name" value="HJ-resolvase_A22"/>
</dbReference>
<dbReference type="InterPro" id="IPR012337">
    <property type="entry name" value="RNaseH-like_sf"/>
</dbReference>
<dbReference type="Pfam" id="PF04848">
    <property type="entry name" value="Pox_A22"/>
    <property type="match status" value="1"/>
</dbReference>
<dbReference type="SUPFAM" id="SSF53098">
    <property type="entry name" value="Ribonuclease H-like"/>
    <property type="match status" value="1"/>
</dbReference>
<gene>
    <name type="primary">OPG149</name>
    <name type="ORF">A22R</name>
    <name type="ORF">A23R</name>
</gene>
<evidence type="ECO:0000250" key="1">
    <source>
        <dbReference type="UniProtKB" id="Q80HV3"/>
    </source>
</evidence>
<evidence type="ECO:0000305" key="2"/>
<comment type="function">
    <text evidence="1">Plays a role in DNA replication by cleaving viral DNA concatamers to yield unit-length viral genomes. The concatamer junctions contain inverted repeat sequences that can be extruded as cruciforms, yielding Holliday junctions that A22 protein cleaves.</text>
</comment>
<comment type="cofactor">
    <cofactor evidence="1">
        <name>Mg(2+)</name>
        <dbReference type="ChEBI" id="CHEBI:18420"/>
    </cofactor>
    <text evidence="1">Binds 1 Mg(2+) ion per subunit.</text>
</comment>
<comment type="similarity">
    <text evidence="2">Belongs to the RuvC family. Poxviruses-type subfamily.</text>
</comment>
<proteinExistence type="inferred from homology"/>
<organismHost>
    <name type="scientific">Homo sapiens</name>
    <name type="common">Human</name>
    <dbReference type="NCBI Taxonomy" id="9606"/>
</organismHost>
<feature type="chain" id="PRO_0000448124" description="Resolvase OPG149">
    <location>
        <begin position="1"/>
        <end position="187"/>
    </location>
</feature>
<name>RUVV_VARV</name>
<organism>
    <name type="scientific">Variola virus</name>
    <dbReference type="NCBI Taxonomy" id="10255"/>
    <lineage>
        <taxon>Viruses</taxon>
        <taxon>Varidnaviria</taxon>
        <taxon>Bamfordvirae</taxon>
        <taxon>Nucleocytoviricota</taxon>
        <taxon>Pokkesviricetes</taxon>
        <taxon>Chitovirales</taxon>
        <taxon>Poxviridae</taxon>
        <taxon>Chordopoxvirinae</taxon>
        <taxon>Orthopoxvirus</taxon>
    </lineage>
</organism>